<name>NCAP_SHRV</name>
<keyword id="KW-0167">Capsid protein</keyword>
<keyword id="KW-1139">Helical capsid protein</keyword>
<keyword id="KW-1035">Host cytoplasm</keyword>
<keyword id="KW-0597">Phosphoprotein</keyword>
<keyword id="KW-1185">Reference proteome</keyword>
<keyword id="KW-0687">Ribonucleoprotein</keyword>
<keyword id="KW-0694">RNA-binding</keyword>
<keyword id="KW-0543">Viral nucleoprotein</keyword>
<keyword id="KW-0946">Virion</keyword>
<organism>
    <name type="scientific">Snakehead rhabdovirus</name>
    <name type="common">SHRV</name>
    <dbReference type="NCBI Taxonomy" id="103603"/>
    <lineage>
        <taxon>Viruses</taxon>
        <taxon>Riboviria</taxon>
        <taxon>Orthornavirae</taxon>
        <taxon>Negarnaviricota</taxon>
        <taxon>Haploviricotina</taxon>
        <taxon>Monjiviricetes</taxon>
        <taxon>Mononegavirales</taxon>
        <taxon>Rhabdoviridae</taxon>
        <taxon>Gammarhabdovirinae</taxon>
        <taxon>Novirhabdovirus</taxon>
        <taxon>Novirhabdovirus snakehead</taxon>
    </lineage>
</organism>
<accession>Q9QJT9</accession>
<feature type="chain" id="PRO_0000297614" description="Nucleoprotein">
    <location>
        <begin position="1"/>
        <end position="399"/>
    </location>
</feature>
<feature type="region of interest" description="Disordered" evidence="2">
    <location>
        <begin position="361"/>
        <end position="399"/>
    </location>
</feature>
<feature type="compositionally biased region" description="Acidic residues" evidence="2">
    <location>
        <begin position="381"/>
        <end position="393"/>
    </location>
</feature>
<evidence type="ECO:0000250" key="1"/>
<evidence type="ECO:0000256" key="2">
    <source>
        <dbReference type="SAM" id="MobiDB-lite"/>
    </source>
</evidence>
<evidence type="ECO:0000305" key="3"/>
<gene>
    <name type="primary">N</name>
</gene>
<protein>
    <recommendedName>
        <fullName>Nucleoprotein</fullName>
        <shortName>NP</shortName>
    </recommendedName>
    <alternativeName>
        <fullName>Nucleocapsid protein</fullName>
        <shortName>Protein N</shortName>
    </alternativeName>
</protein>
<reference key="1">
    <citation type="journal article" date="2000" name="J. Virol.">
        <title>Production of recombinant snakehead rhabdovirus: the NV protein is not required for viral replication.</title>
        <authorList>
            <person name="Johnson M.C."/>
            <person name="Simon B.E."/>
            <person name="Kim C.H."/>
            <person name="Leong J.A."/>
        </authorList>
    </citation>
    <scope>NUCLEOTIDE SEQUENCE [GENOMIC RNA]</scope>
</reference>
<organismHost>
    <name type="scientific">Gobiosoma bosc</name>
    <name type="common">Naked goby</name>
    <name type="synonym">Gobius bosc</name>
    <dbReference type="NCBI Taxonomy" id="203314"/>
</organismHost>
<sequence length="399" mass="43368">MAFQKEFFGLRDVKVDLSAGEGLDFDPSEVELTVYRTGADTDGNTIIKALAAVGGPKTNEALSVLLAFVTLGTDQDEYETRIKILKEIGFSVKEVPMAKDASSGIEAPLENVAALVKPETVYQVIRGVLYTCALFVKYNVEKMQKYIKNKLPALATSYGVPELEEFPTESSALKKLASCIRPGQRITNALYAFLLVEMARPETQQGARALAAMRINGTGMTMVGLFTQAAKNLGATPSDLLEDLCMRSLVDSARRIVRLMVQVSQAETIQARYAVMMSRMLNENYFKAYGLNDNSRISAILVAVNGHFSEDTIEALEGIKVSAEFADLARRIAIALIEKYDNASDGGEGASEIIKSAVRGSSGAFKGSRGKPQGRRQEASGEGDLDSEDDDDQDYSKYA</sequence>
<comment type="function">
    <text evidence="1">Encapsidates the genome, protecting it from nucleases. If expressed without protein P it binds non-specifically RNA and therefore can bind it's own mRNA. Interaction with protein P abolishes any non-specific RNA binding, and prevents phosphorylation. The soluble N-P complex encapsidates specifically the genomic RNA, with protein N protecting the genome like a pearl necklace. The encapsidated genomic RNA is termed the nucleocapsid (NC) and serves as template for viral transcription and replication. Protein N binds protein P in the NC through a different interaction, and can be phosphorylated. Subsequent viral replication is dependent on intracellular concentration of newly synthesized protein N. During replication, encapsidation by protein N is coupled to RNA synthesis and all replicative products are resistant to nucleases (By similarity).</text>
</comment>
<comment type="subunit">
    <text evidence="1">Homomultimerizes to form the nucleocapsid. Binds to viral genomic RNA (By similarity).</text>
</comment>
<comment type="subcellular location">
    <subcellularLocation>
        <location>Virion</location>
    </subcellularLocation>
    <subcellularLocation>
        <location evidence="1">Host cytoplasm</location>
    </subcellularLocation>
</comment>
<comment type="similarity">
    <text evidence="3">Belongs to the novirhabdovirus nucleocapsid protein family.</text>
</comment>
<dbReference type="EMBL" id="AF147498">
    <property type="protein sequence ID" value="AAD56766.1"/>
    <property type="molecule type" value="Genomic_RNA"/>
</dbReference>
<dbReference type="RefSeq" id="NP_050580.1">
    <property type="nucleotide sequence ID" value="NC_000903.1"/>
</dbReference>
<dbReference type="SMR" id="Q9QJT9"/>
<dbReference type="GeneID" id="1457769"/>
<dbReference type="KEGG" id="vg:1457769"/>
<dbReference type="OrthoDB" id="11875at10239"/>
<dbReference type="Proteomes" id="UP000007219">
    <property type="component" value="Genome"/>
</dbReference>
<dbReference type="GO" id="GO:0019029">
    <property type="term" value="C:helical viral capsid"/>
    <property type="evidence" value="ECO:0007669"/>
    <property type="project" value="UniProtKB-KW"/>
</dbReference>
<dbReference type="GO" id="GO:0030430">
    <property type="term" value="C:host cell cytoplasm"/>
    <property type="evidence" value="ECO:0007669"/>
    <property type="project" value="UniProtKB-SubCell"/>
</dbReference>
<dbReference type="GO" id="GO:1990904">
    <property type="term" value="C:ribonucleoprotein complex"/>
    <property type="evidence" value="ECO:0007669"/>
    <property type="project" value="UniProtKB-KW"/>
</dbReference>
<dbReference type="GO" id="GO:0019013">
    <property type="term" value="C:viral nucleocapsid"/>
    <property type="evidence" value="ECO:0007669"/>
    <property type="project" value="UniProtKB-KW"/>
</dbReference>
<dbReference type="GO" id="GO:0003723">
    <property type="term" value="F:RNA binding"/>
    <property type="evidence" value="ECO:0007669"/>
    <property type="project" value="UniProtKB-KW"/>
</dbReference>
<dbReference type="InterPro" id="IPR004902">
    <property type="entry name" value="Rhabdo_ncap_2"/>
</dbReference>
<dbReference type="Pfam" id="PF03216">
    <property type="entry name" value="Rhabdo_ncap_2"/>
    <property type="match status" value="1"/>
</dbReference>
<proteinExistence type="inferred from homology"/>